<dbReference type="EMBL" id="CP000943">
    <property type="protein sequence ID" value="ACA14828.1"/>
    <property type="molecule type" value="Genomic_DNA"/>
</dbReference>
<dbReference type="RefSeq" id="WP_012330246.1">
    <property type="nucleotide sequence ID" value="NC_010511.1"/>
</dbReference>
<dbReference type="SMR" id="B0UFH4"/>
<dbReference type="STRING" id="426117.M446_0257"/>
<dbReference type="KEGG" id="met:M446_0257"/>
<dbReference type="eggNOG" id="COG1220">
    <property type="taxonomic scope" value="Bacteria"/>
</dbReference>
<dbReference type="HOGENOM" id="CLU_033123_0_0_5"/>
<dbReference type="GO" id="GO:0009376">
    <property type="term" value="C:HslUV protease complex"/>
    <property type="evidence" value="ECO:0007669"/>
    <property type="project" value="UniProtKB-UniRule"/>
</dbReference>
<dbReference type="GO" id="GO:0005524">
    <property type="term" value="F:ATP binding"/>
    <property type="evidence" value="ECO:0007669"/>
    <property type="project" value="UniProtKB-UniRule"/>
</dbReference>
<dbReference type="GO" id="GO:0016887">
    <property type="term" value="F:ATP hydrolysis activity"/>
    <property type="evidence" value="ECO:0007669"/>
    <property type="project" value="InterPro"/>
</dbReference>
<dbReference type="GO" id="GO:0008233">
    <property type="term" value="F:peptidase activity"/>
    <property type="evidence" value="ECO:0007669"/>
    <property type="project" value="InterPro"/>
</dbReference>
<dbReference type="GO" id="GO:0036402">
    <property type="term" value="F:proteasome-activating activity"/>
    <property type="evidence" value="ECO:0007669"/>
    <property type="project" value="UniProtKB-UniRule"/>
</dbReference>
<dbReference type="GO" id="GO:0043335">
    <property type="term" value="P:protein unfolding"/>
    <property type="evidence" value="ECO:0007669"/>
    <property type="project" value="UniProtKB-UniRule"/>
</dbReference>
<dbReference type="GO" id="GO:0051603">
    <property type="term" value="P:proteolysis involved in protein catabolic process"/>
    <property type="evidence" value="ECO:0007669"/>
    <property type="project" value="TreeGrafter"/>
</dbReference>
<dbReference type="CDD" id="cd19498">
    <property type="entry name" value="RecA-like_HslU"/>
    <property type="match status" value="1"/>
</dbReference>
<dbReference type="FunFam" id="3.40.50.300:FF:000213">
    <property type="entry name" value="ATP-dependent protease ATPase subunit HslU"/>
    <property type="match status" value="1"/>
</dbReference>
<dbReference type="FunFam" id="3.40.50.300:FF:000220">
    <property type="entry name" value="ATP-dependent protease ATPase subunit HslU"/>
    <property type="match status" value="1"/>
</dbReference>
<dbReference type="Gene3D" id="1.10.8.60">
    <property type="match status" value="1"/>
</dbReference>
<dbReference type="Gene3D" id="1.10.8.10">
    <property type="entry name" value="DNA helicase RuvA subunit, C-terminal domain"/>
    <property type="match status" value="1"/>
</dbReference>
<dbReference type="Gene3D" id="3.40.50.300">
    <property type="entry name" value="P-loop containing nucleotide triphosphate hydrolases"/>
    <property type="match status" value="1"/>
</dbReference>
<dbReference type="HAMAP" id="MF_00249">
    <property type="entry name" value="HslU"/>
    <property type="match status" value="1"/>
</dbReference>
<dbReference type="InterPro" id="IPR003593">
    <property type="entry name" value="AAA+_ATPase"/>
</dbReference>
<dbReference type="InterPro" id="IPR050052">
    <property type="entry name" value="ATP-dep_Clp_protease_ClpX"/>
</dbReference>
<dbReference type="InterPro" id="IPR003959">
    <property type="entry name" value="ATPase_AAA_core"/>
</dbReference>
<dbReference type="InterPro" id="IPR011704">
    <property type="entry name" value="ATPase_dyneun-rel_AAA"/>
</dbReference>
<dbReference type="InterPro" id="IPR019489">
    <property type="entry name" value="Clp_ATPase_C"/>
</dbReference>
<dbReference type="InterPro" id="IPR004491">
    <property type="entry name" value="HslU"/>
</dbReference>
<dbReference type="InterPro" id="IPR027417">
    <property type="entry name" value="P-loop_NTPase"/>
</dbReference>
<dbReference type="NCBIfam" id="TIGR00390">
    <property type="entry name" value="hslU"/>
    <property type="match status" value="1"/>
</dbReference>
<dbReference type="NCBIfam" id="NF003544">
    <property type="entry name" value="PRK05201.1"/>
    <property type="match status" value="1"/>
</dbReference>
<dbReference type="PANTHER" id="PTHR48102">
    <property type="entry name" value="ATP-DEPENDENT CLP PROTEASE ATP-BINDING SUBUNIT CLPX-LIKE, MITOCHONDRIAL-RELATED"/>
    <property type="match status" value="1"/>
</dbReference>
<dbReference type="PANTHER" id="PTHR48102:SF3">
    <property type="entry name" value="ATP-DEPENDENT PROTEASE ATPASE SUBUNIT HSLU"/>
    <property type="match status" value="1"/>
</dbReference>
<dbReference type="Pfam" id="PF07724">
    <property type="entry name" value="AAA_2"/>
    <property type="match status" value="1"/>
</dbReference>
<dbReference type="Pfam" id="PF07728">
    <property type="entry name" value="AAA_5"/>
    <property type="match status" value="1"/>
</dbReference>
<dbReference type="SMART" id="SM00382">
    <property type="entry name" value="AAA"/>
    <property type="match status" value="1"/>
</dbReference>
<dbReference type="SMART" id="SM01086">
    <property type="entry name" value="ClpB_D2-small"/>
    <property type="match status" value="1"/>
</dbReference>
<dbReference type="SUPFAM" id="SSF52540">
    <property type="entry name" value="P-loop containing nucleoside triphosphate hydrolases"/>
    <property type="match status" value="1"/>
</dbReference>
<keyword id="KW-0067">ATP-binding</keyword>
<keyword id="KW-0143">Chaperone</keyword>
<keyword id="KW-0963">Cytoplasm</keyword>
<keyword id="KW-0547">Nucleotide-binding</keyword>
<keyword id="KW-0346">Stress response</keyword>
<accession>B0UFH4</accession>
<organism>
    <name type="scientific">Methylobacterium sp. (strain 4-46)</name>
    <dbReference type="NCBI Taxonomy" id="426117"/>
    <lineage>
        <taxon>Bacteria</taxon>
        <taxon>Pseudomonadati</taxon>
        <taxon>Pseudomonadota</taxon>
        <taxon>Alphaproteobacteria</taxon>
        <taxon>Hyphomicrobiales</taxon>
        <taxon>Methylobacteriaceae</taxon>
        <taxon>Methylobacterium</taxon>
    </lineage>
</organism>
<gene>
    <name evidence="1" type="primary">hslU</name>
    <name type="ordered locus">M446_0257</name>
</gene>
<evidence type="ECO:0000255" key="1">
    <source>
        <dbReference type="HAMAP-Rule" id="MF_00249"/>
    </source>
</evidence>
<protein>
    <recommendedName>
        <fullName evidence="1">ATP-dependent protease ATPase subunit HslU</fullName>
    </recommendedName>
    <alternativeName>
        <fullName evidence="1">Unfoldase HslU</fullName>
    </alternativeName>
</protein>
<comment type="function">
    <text evidence="1">ATPase subunit of a proteasome-like degradation complex; this subunit has chaperone activity. The binding of ATP and its subsequent hydrolysis by HslU are essential for unfolding of protein substrates subsequently hydrolyzed by HslV. HslU recognizes the N-terminal part of its protein substrates and unfolds these before they are guided to HslV for hydrolysis.</text>
</comment>
<comment type="subunit">
    <text evidence="1">A double ring-shaped homohexamer of HslV is capped on each side by a ring-shaped HslU homohexamer. The assembly of the HslU/HslV complex is dependent on binding of ATP.</text>
</comment>
<comment type="subcellular location">
    <subcellularLocation>
        <location evidence="1">Cytoplasm</location>
    </subcellularLocation>
</comment>
<comment type="similarity">
    <text evidence="1">Belongs to the ClpX chaperone family. HslU subfamily.</text>
</comment>
<reference key="1">
    <citation type="submission" date="2008-02" db="EMBL/GenBank/DDBJ databases">
        <title>Complete sequence of chromosome of Methylobacterium sp. 4-46.</title>
        <authorList>
            <consortium name="US DOE Joint Genome Institute"/>
            <person name="Copeland A."/>
            <person name="Lucas S."/>
            <person name="Lapidus A."/>
            <person name="Glavina del Rio T."/>
            <person name="Dalin E."/>
            <person name="Tice H."/>
            <person name="Bruce D."/>
            <person name="Goodwin L."/>
            <person name="Pitluck S."/>
            <person name="Chertkov O."/>
            <person name="Brettin T."/>
            <person name="Detter J.C."/>
            <person name="Han C."/>
            <person name="Kuske C.R."/>
            <person name="Schmutz J."/>
            <person name="Larimer F."/>
            <person name="Land M."/>
            <person name="Hauser L."/>
            <person name="Kyrpides N."/>
            <person name="Ivanova N."/>
            <person name="Marx C.J."/>
            <person name="Richardson P."/>
        </authorList>
    </citation>
    <scope>NUCLEOTIDE SEQUENCE [LARGE SCALE GENOMIC DNA]</scope>
    <source>
        <strain>4-46</strain>
    </source>
</reference>
<feature type="chain" id="PRO_1000100958" description="ATP-dependent protease ATPase subunit HslU">
    <location>
        <begin position="1"/>
        <end position="437"/>
    </location>
</feature>
<feature type="binding site" evidence="1">
    <location>
        <position position="18"/>
    </location>
    <ligand>
        <name>ATP</name>
        <dbReference type="ChEBI" id="CHEBI:30616"/>
    </ligand>
</feature>
<feature type="binding site" evidence="1">
    <location>
        <begin position="60"/>
        <end position="65"/>
    </location>
    <ligand>
        <name>ATP</name>
        <dbReference type="ChEBI" id="CHEBI:30616"/>
    </ligand>
</feature>
<feature type="binding site" evidence="1">
    <location>
        <position position="250"/>
    </location>
    <ligand>
        <name>ATP</name>
        <dbReference type="ChEBI" id="CHEBI:30616"/>
    </ligand>
</feature>
<feature type="binding site" evidence="1">
    <location>
        <position position="315"/>
    </location>
    <ligand>
        <name>ATP</name>
        <dbReference type="ChEBI" id="CHEBI:30616"/>
    </ligand>
</feature>
<feature type="binding site" evidence="1">
    <location>
        <position position="387"/>
    </location>
    <ligand>
        <name>ATP</name>
        <dbReference type="ChEBI" id="CHEBI:30616"/>
    </ligand>
</feature>
<sequence>MTTFSPREIVSELDRYIVGQADAKRAVAIALRNRWRRQQLHGPLREEVAPKNILMIGPTGCGKTEISRRLARLANAPFLKVEATKFTEVGYVGRDVEQIVRDLVEVGIGLKRDEKRRSVQARAEAAAEARILDALVGPTAGQATRDSFRRRLRAGELDDKEVEIELASAAPSGLPMFEIPGVPGAAMGAINLGDMLGKALGGQKGKPRRVTVRDAHAPLMAEESDKLLDQDAIVQEAVREVEDNGIVFLDEVDKICAREGRGGADVSREGVQRDLLPLIEGTTVATKHGPVKTDHILFIASGAFHVSKPSDLLPELQGRLPIRVELAPLTVDDFRRILTETEASLLKQAVALMATEGVAVTFTEDAVDALARVAVEVNSSVENIGARRLQTVLERVLDEISFTAPDRAGESVTIDAAYVRERVESLAQNADLSRFIL</sequence>
<proteinExistence type="inferred from homology"/>
<name>HSLU_METS4</name>